<organism>
    <name type="scientific">Kineococcus radiotolerans (strain ATCC BAA-149 / DSM 14245 / SRS30216)</name>
    <dbReference type="NCBI Taxonomy" id="266940"/>
    <lineage>
        <taxon>Bacteria</taxon>
        <taxon>Bacillati</taxon>
        <taxon>Actinomycetota</taxon>
        <taxon>Actinomycetes</taxon>
        <taxon>Kineosporiales</taxon>
        <taxon>Kineosporiaceae</taxon>
        <taxon>Kineococcus</taxon>
    </lineage>
</organism>
<sequence length="128" mass="13227">MAKLSTDELLDAFKELTLIELSEFVKKFEETFDVTAAAPVAVAAAGGAAGAPAEAAEEQSEFDVILESAGDKKIGVIKEVRALTSLGLKEAKDLVDGAPKPVLEKVAKDAAEKAKAQLEGAGATVTLK</sequence>
<keyword id="KW-1185">Reference proteome</keyword>
<keyword id="KW-0687">Ribonucleoprotein</keyword>
<keyword id="KW-0689">Ribosomal protein</keyword>
<evidence type="ECO:0000255" key="1">
    <source>
        <dbReference type="HAMAP-Rule" id="MF_00368"/>
    </source>
</evidence>
<evidence type="ECO:0000305" key="2"/>
<feature type="chain" id="PRO_1000079799" description="Large ribosomal subunit protein bL12">
    <location>
        <begin position="1"/>
        <end position="128"/>
    </location>
</feature>
<proteinExistence type="inferred from homology"/>
<name>RL7_KINRD</name>
<dbReference type="EMBL" id="CP000750">
    <property type="protein sequence ID" value="ABS02168.1"/>
    <property type="molecule type" value="Genomic_DNA"/>
</dbReference>
<dbReference type="RefSeq" id="WP_012084990.1">
    <property type="nucleotide sequence ID" value="NC_009664.2"/>
</dbReference>
<dbReference type="SMR" id="A6W5S9"/>
<dbReference type="STRING" id="266940.Krad_0679"/>
<dbReference type="KEGG" id="kra:Krad_0679"/>
<dbReference type="eggNOG" id="COG0222">
    <property type="taxonomic scope" value="Bacteria"/>
</dbReference>
<dbReference type="HOGENOM" id="CLU_086499_3_0_11"/>
<dbReference type="OrthoDB" id="9811748at2"/>
<dbReference type="Proteomes" id="UP000001116">
    <property type="component" value="Chromosome"/>
</dbReference>
<dbReference type="GO" id="GO:0022625">
    <property type="term" value="C:cytosolic large ribosomal subunit"/>
    <property type="evidence" value="ECO:0007669"/>
    <property type="project" value="TreeGrafter"/>
</dbReference>
<dbReference type="GO" id="GO:0003729">
    <property type="term" value="F:mRNA binding"/>
    <property type="evidence" value="ECO:0007669"/>
    <property type="project" value="TreeGrafter"/>
</dbReference>
<dbReference type="GO" id="GO:0003735">
    <property type="term" value="F:structural constituent of ribosome"/>
    <property type="evidence" value="ECO:0007669"/>
    <property type="project" value="InterPro"/>
</dbReference>
<dbReference type="GO" id="GO:0006412">
    <property type="term" value="P:translation"/>
    <property type="evidence" value="ECO:0007669"/>
    <property type="project" value="UniProtKB-UniRule"/>
</dbReference>
<dbReference type="CDD" id="cd00387">
    <property type="entry name" value="Ribosomal_L7_L12"/>
    <property type="match status" value="1"/>
</dbReference>
<dbReference type="FunFam" id="1.20.5.710:FF:000005">
    <property type="entry name" value="50S ribosomal protein L7/L12"/>
    <property type="match status" value="1"/>
</dbReference>
<dbReference type="FunFam" id="3.30.1390.10:FF:000001">
    <property type="entry name" value="50S ribosomal protein L7/L12"/>
    <property type="match status" value="1"/>
</dbReference>
<dbReference type="Gene3D" id="3.30.1390.10">
    <property type="match status" value="1"/>
</dbReference>
<dbReference type="Gene3D" id="1.20.5.710">
    <property type="entry name" value="Single helix bin"/>
    <property type="match status" value="1"/>
</dbReference>
<dbReference type="HAMAP" id="MF_00368">
    <property type="entry name" value="Ribosomal_bL12"/>
    <property type="match status" value="1"/>
</dbReference>
<dbReference type="InterPro" id="IPR000206">
    <property type="entry name" value="Ribosomal_bL12"/>
</dbReference>
<dbReference type="InterPro" id="IPR013823">
    <property type="entry name" value="Ribosomal_bL12_C"/>
</dbReference>
<dbReference type="InterPro" id="IPR014719">
    <property type="entry name" value="Ribosomal_bL12_C/ClpS-like"/>
</dbReference>
<dbReference type="InterPro" id="IPR008932">
    <property type="entry name" value="Ribosomal_bL12_oligo"/>
</dbReference>
<dbReference type="InterPro" id="IPR036235">
    <property type="entry name" value="Ribosomal_bL12_oligo_N_sf"/>
</dbReference>
<dbReference type="NCBIfam" id="TIGR00855">
    <property type="entry name" value="L12"/>
    <property type="match status" value="1"/>
</dbReference>
<dbReference type="PANTHER" id="PTHR45987">
    <property type="entry name" value="39S RIBOSOMAL PROTEIN L12"/>
    <property type="match status" value="1"/>
</dbReference>
<dbReference type="PANTHER" id="PTHR45987:SF4">
    <property type="entry name" value="LARGE RIBOSOMAL SUBUNIT PROTEIN BL12M"/>
    <property type="match status" value="1"/>
</dbReference>
<dbReference type="Pfam" id="PF00542">
    <property type="entry name" value="Ribosomal_L12"/>
    <property type="match status" value="1"/>
</dbReference>
<dbReference type="Pfam" id="PF16320">
    <property type="entry name" value="Ribosomal_L12_N"/>
    <property type="match status" value="1"/>
</dbReference>
<dbReference type="SUPFAM" id="SSF54736">
    <property type="entry name" value="ClpS-like"/>
    <property type="match status" value="1"/>
</dbReference>
<dbReference type="SUPFAM" id="SSF48300">
    <property type="entry name" value="Ribosomal protein L7/12, oligomerisation (N-terminal) domain"/>
    <property type="match status" value="1"/>
</dbReference>
<reference key="1">
    <citation type="journal article" date="2008" name="PLoS ONE">
        <title>Survival in nuclear waste, extreme resistance, and potential applications gleaned from the genome sequence of Kineococcus radiotolerans SRS30216.</title>
        <authorList>
            <person name="Bagwell C.E."/>
            <person name="Bhat S."/>
            <person name="Hawkins G.M."/>
            <person name="Smith B.W."/>
            <person name="Biswas T."/>
            <person name="Hoover T.R."/>
            <person name="Saunders E."/>
            <person name="Han C.S."/>
            <person name="Tsodikov O.V."/>
            <person name="Shimkets L.J."/>
        </authorList>
    </citation>
    <scope>NUCLEOTIDE SEQUENCE [LARGE SCALE GENOMIC DNA]</scope>
    <source>
        <strain>ATCC BAA-149 / DSM 14245 / SRS30216</strain>
    </source>
</reference>
<protein>
    <recommendedName>
        <fullName evidence="1">Large ribosomal subunit protein bL12</fullName>
    </recommendedName>
    <alternativeName>
        <fullName evidence="2">50S ribosomal protein L7/L12</fullName>
    </alternativeName>
</protein>
<accession>A6W5S9</accession>
<comment type="function">
    <text evidence="1">Forms part of the ribosomal stalk which helps the ribosome interact with GTP-bound translation factors. Is thus essential for accurate translation.</text>
</comment>
<comment type="subunit">
    <text evidence="1">Homodimer. Part of the ribosomal stalk of the 50S ribosomal subunit. Forms a multimeric L10(L12)X complex, where L10 forms an elongated spine to which 2 to 4 L12 dimers bind in a sequential fashion. Binds GTP-bound translation factors.</text>
</comment>
<comment type="similarity">
    <text evidence="1">Belongs to the bacterial ribosomal protein bL12 family.</text>
</comment>
<gene>
    <name evidence="1" type="primary">rplL</name>
    <name type="ordered locus">Krad_0679</name>
</gene>